<evidence type="ECO:0000255" key="1">
    <source>
        <dbReference type="HAMAP-Rule" id="MF_00152"/>
    </source>
</evidence>
<dbReference type="EC" id="3.1.21.2" evidence="1"/>
<dbReference type="EMBL" id="CP000112">
    <property type="protein sequence ID" value="ABB39199.1"/>
    <property type="molecule type" value="Genomic_DNA"/>
</dbReference>
<dbReference type="RefSeq" id="WP_011368271.1">
    <property type="nucleotide sequence ID" value="NC_007519.1"/>
</dbReference>
<dbReference type="SMR" id="Q30YP7"/>
<dbReference type="STRING" id="207559.Dde_2402"/>
<dbReference type="KEGG" id="dde:Dde_2402"/>
<dbReference type="eggNOG" id="COG0648">
    <property type="taxonomic scope" value="Bacteria"/>
</dbReference>
<dbReference type="HOGENOM" id="CLU_025885_0_1_7"/>
<dbReference type="Proteomes" id="UP000002710">
    <property type="component" value="Chromosome"/>
</dbReference>
<dbReference type="GO" id="GO:0008833">
    <property type="term" value="F:deoxyribonuclease IV (phage-T4-induced) activity"/>
    <property type="evidence" value="ECO:0007669"/>
    <property type="project" value="UniProtKB-UniRule"/>
</dbReference>
<dbReference type="GO" id="GO:0003677">
    <property type="term" value="F:DNA binding"/>
    <property type="evidence" value="ECO:0007669"/>
    <property type="project" value="InterPro"/>
</dbReference>
<dbReference type="GO" id="GO:0003906">
    <property type="term" value="F:DNA-(apurinic or apyrimidinic site) endonuclease activity"/>
    <property type="evidence" value="ECO:0007669"/>
    <property type="project" value="TreeGrafter"/>
</dbReference>
<dbReference type="GO" id="GO:0008081">
    <property type="term" value="F:phosphoric diester hydrolase activity"/>
    <property type="evidence" value="ECO:0007669"/>
    <property type="project" value="TreeGrafter"/>
</dbReference>
<dbReference type="GO" id="GO:0008270">
    <property type="term" value="F:zinc ion binding"/>
    <property type="evidence" value="ECO:0007669"/>
    <property type="project" value="UniProtKB-UniRule"/>
</dbReference>
<dbReference type="GO" id="GO:0006284">
    <property type="term" value="P:base-excision repair"/>
    <property type="evidence" value="ECO:0007669"/>
    <property type="project" value="TreeGrafter"/>
</dbReference>
<dbReference type="CDD" id="cd00019">
    <property type="entry name" value="AP2Ec"/>
    <property type="match status" value="1"/>
</dbReference>
<dbReference type="FunFam" id="3.20.20.150:FF:000001">
    <property type="entry name" value="Probable endonuclease 4"/>
    <property type="match status" value="1"/>
</dbReference>
<dbReference type="Gene3D" id="3.20.20.150">
    <property type="entry name" value="Divalent-metal-dependent TIM barrel enzymes"/>
    <property type="match status" value="1"/>
</dbReference>
<dbReference type="HAMAP" id="MF_00152">
    <property type="entry name" value="Nfo"/>
    <property type="match status" value="1"/>
</dbReference>
<dbReference type="InterPro" id="IPR001719">
    <property type="entry name" value="AP_endonuc_2"/>
</dbReference>
<dbReference type="InterPro" id="IPR018246">
    <property type="entry name" value="AP_endonuc_F2_Zn_BS"/>
</dbReference>
<dbReference type="InterPro" id="IPR036237">
    <property type="entry name" value="Xyl_isomerase-like_sf"/>
</dbReference>
<dbReference type="InterPro" id="IPR013022">
    <property type="entry name" value="Xyl_isomerase-like_TIM-brl"/>
</dbReference>
<dbReference type="NCBIfam" id="TIGR00587">
    <property type="entry name" value="nfo"/>
    <property type="match status" value="1"/>
</dbReference>
<dbReference type="PANTHER" id="PTHR21445:SF0">
    <property type="entry name" value="APURINIC-APYRIMIDINIC ENDONUCLEASE"/>
    <property type="match status" value="1"/>
</dbReference>
<dbReference type="PANTHER" id="PTHR21445">
    <property type="entry name" value="ENDONUCLEASE IV ENDODEOXYRIBONUCLEASE IV"/>
    <property type="match status" value="1"/>
</dbReference>
<dbReference type="Pfam" id="PF01261">
    <property type="entry name" value="AP_endonuc_2"/>
    <property type="match status" value="1"/>
</dbReference>
<dbReference type="SMART" id="SM00518">
    <property type="entry name" value="AP2Ec"/>
    <property type="match status" value="1"/>
</dbReference>
<dbReference type="SUPFAM" id="SSF51658">
    <property type="entry name" value="Xylose isomerase-like"/>
    <property type="match status" value="1"/>
</dbReference>
<dbReference type="PROSITE" id="PS00729">
    <property type="entry name" value="AP_NUCLEASE_F2_1"/>
    <property type="match status" value="1"/>
</dbReference>
<dbReference type="PROSITE" id="PS00731">
    <property type="entry name" value="AP_NUCLEASE_F2_3"/>
    <property type="match status" value="1"/>
</dbReference>
<dbReference type="PROSITE" id="PS51432">
    <property type="entry name" value="AP_NUCLEASE_F2_4"/>
    <property type="match status" value="1"/>
</dbReference>
<keyword id="KW-0227">DNA damage</keyword>
<keyword id="KW-0234">DNA repair</keyword>
<keyword id="KW-0255">Endonuclease</keyword>
<keyword id="KW-0378">Hydrolase</keyword>
<keyword id="KW-0479">Metal-binding</keyword>
<keyword id="KW-0540">Nuclease</keyword>
<keyword id="KW-1185">Reference proteome</keyword>
<keyword id="KW-0862">Zinc</keyword>
<comment type="function">
    <text evidence="1">Endonuclease IV plays a role in DNA repair. It cleaves phosphodiester bonds at apurinic or apyrimidinic (AP) sites, generating a 3'-hydroxyl group and a 5'-terminal sugar phosphate.</text>
</comment>
<comment type="catalytic activity">
    <reaction evidence="1">
        <text>Endonucleolytic cleavage to 5'-phosphooligonucleotide end-products.</text>
        <dbReference type="EC" id="3.1.21.2"/>
    </reaction>
</comment>
<comment type="cofactor">
    <cofactor evidence="1">
        <name>Zn(2+)</name>
        <dbReference type="ChEBI" id="CHEBI:29105"/>
    </cofactor>
    <text evidence="1">Binds 3 Zn(2+) ions.</text>
</comment>
<comment type="similarity">
    <text evidence="1">Belongs to the AP endonuclease 2 family.</text>
</comment>
<reference key="1">
    <citation type="journal article" date="2011" name="J. Bacteriol.">
        <title>Complete genome sequence and updated annotation of Desulfovibrio alaskensis G20.</title>
        <authorList>
            <person name="Hauser L.J."/>
            <person name="Land M.L."/>
            <person name="Brown S.D."/>
            <person name="Larimer F."/>
            <person name="Keller K.L."/>
            <person name="Rapp-Giles B.J."/>
            <person name="Price M.N."/>
            <person name="Lin M."/>
            <person name="Bruce D.C."/>
            <person name="Detter J.C."/>
            <person name="Tapia R."/>
            <person name="Han C.S."/>
            <person name="Goodwin L.A."/>
            <person name="Cheng J.F."/>
            <person name="Pitluck S."/>
            <person name="Copeland A."/>
            <person name="Lucas S."/>
            <person name="Nolan M."/>
            <person name="Lapidus A.L."/>
            <person name="Palumbo A.V."/>
            <person name="Wall J.D."/>
        </authorList>
    </citation>
    <scope>NUCLEOTIDE SEQUENCE [LARGE SCALE GENOMIC DNA]</scope>
    <source>
        <strain>ATCC BAA-1058 / DSM 17464 / G20</strain>
    </source>
</reference>
<feature type="chain" id="PRO_1000123324" description="Probable endonuclease 4">
    <location>
        <begin position="1"/>
        <end position="294"/>
    </location>
</feature>
<feature type="binding site" evidence="1">
    <location>
        <position position="78"/>
    </location>
    <ligand>
        <name>Zn(2+)</name>
        <dbReference type="ChEBI" id="CHEBI:29105"/>
        <label>1</label>
    </ligand>
</feature>
<feature type="binding site" evidence="1">
    <location>
        <position position="118"/>
    </location>
    <ligand>
        <name>Zn(2+)</name>
        <dbReference type="ChEBI" id="CHEBI:29105"/>
        <label>1</label>
    </ligand>
</feature>
<feature type="binding site" evidence="1">
    <location>
        <position position="155"/>
    </location>
    <ligand>
        <name>Zn(2+)</name>
        <dbReference type="ChEBI" id="CHEBI:29105"/>
        <label>1</label>
    </ligand>
</feature>
<feature type="binding site" evidence="1">
    <location>
        <position position="155"/>
    </location>
    <ligand>
        <name>Zn(2+)</name>
        <dbReference type="ChEBI" id="CHEBI:29105"/>
        <label>2</label>
    </ligand>
</feature>
<feature type="binding site" evidence="1">
    <location>
        <position position="189"/>
    </location>
    <ligand>
        <name>Zn(2+)</name>
        <dbReference type="ChEBI" id="CHEBI:29105"/>
        <label>2</label>
    </ligand>
</feature>
<feature type="binding site" evidence="1">
    <location>
        <position position="192"/>
    </location>
    <ligand>
        <name>Zn(2+)</name>
        <dbReference type="ChEBI" id="CHEBI:29105"/>
        <label>3</label>
    </ligand>
</feature>
<feature type="binding site" evidence="1">
    <location>
        <position position="226"/>
    </location>
    <ligand>
        <name>Zn(2+)</name>
        <dbReference type="ChEBI" id="CHEBI:29105"/>
        <label>2</label>
    </ligand>
</feature>
<feature type="binding site" evidence="1">
    <location>
        <position position="239"/>
    </location>
    <ligand>
        <name>Zn(2+)</name>
        <dbReference type="ChEBI" id="CHEBI:29105"/>
        <label>3</label>
    </ligand>
</feature>
<feature type="binding site" evidence="1">
    <location>
        <position position="241"/>
    </location>
    <ligand>
        <name>Zn(2+)</name>
        <dbReference type="ChEBI" id="CHEBI:29105"/>
        <label>3</label>
    </ligand>
</feature>
<feature type="binding site" evidence="1">
    <location>
        <position position="271"/>
    </location>
    <ligand>
        <name>Zn(2+)</name>
        <dbReference type="ChEBI" id="CHEBI:29105"/>
        <label>2</label>
    </ligand>
</feature>
<organism>
    <name type="scientific">Oleidesulfovibrio alaskensis (strain ATCC BAA-1058 / DSM 17464 / G20)</name>
    <name type="common">Desulfovibrio alaskensis</name>
    <dbReference type="NCBI Taxonomy" id="207559"/>
    <lineage>
        <taxon>Bacteria</taxon>
        <taxon>Pseudomonadati</taxon>
        <taxon>Thermodesulfobacteriota</taxon>
        <taxon>Desulfovibrionia</taxon>
        <taxon>Desulfovibrionales</taxon>
        <taxon>Desulfovibrionaceae</taxon>
        <taxon>Oleidesulfovibrio</taxon>
    </lineage>
</organism>
<name>END4_OLEA2</name>
<accession>Q30YP7</accession>
<proteinExistence type="inferred from homology"/>
<sequence length="294" mass="31475">METISRQNKPQQQLIGAHMSAAGGVHKAVERAEAAGATALQVFTRNQRQWNAPPLEEHDAELFTAAVRRWGGYPVSSHASYLINPAADTPEGAERSVALMADELQRAGRLGIEMVVVHPGAHKGQGEAAGAALAAARLDEALERCGSPAVMVLLENTAGQGTMLGASFAGLAAVIEASRMPERYGICLDTAHAFGAGYDLRDAALYDAAIRELDVCAGLDRLRLVHANDSLTGLGSRRDRHTHIGQGELGEAAFRLLMRDERLHHVPKVLETPKGKGPEEDMMNMAVLRRLACP</sequence>
<protein>
    <recommendedName>
        <fullName evidence="1">Probable endonuclease 4</fullName>
        <ecNumber evidence="1">3.1.21.2</ecNumber>
    </recommendedName>
    <alternativeName>
        <fullName evidence="1">Endodeoxyribonuclease IV</fullName>
    </alternativeName>
    <alternativeName>
        <fullName evidence="1">Endonuclease IV</fullName>
    </alternativeName>
</protein>
<gene>
    <name evidence="1" type="primary">nfo</name>
    <name type="ordered locus">Dde_2402</name>
</gene>